<proteinExistence type="evidence at protein level"/>
<feature type="chain" id="PRO_0000212659" description="GTPase-interacting component 1">
    <location>
        <begin position="1"/>
        <end position="314"/>
    </location>
</feature>
<feature type="domain" description="CRIB" evidence="1">
    <location>
        <begin position="126"/>
        <end position="139"/>
    </location>
</feature>
<feature type="region of interest" description="Disordered" evidence="2">
    <location>
        <begin position="112"/>
        <end position="156"/>
    </location>
</feature>
<feature type="region of interest" description="Disordered" evidence="2">
    <location>
        <begin position="199"/>
        <end position="221"/>
    </location>
</feature>
<feature type="region of interest" description="Disordered" evidence="2">
    <location>
        <begin position="241"/>
        <end position="261"/>
    </location>
</feature>
<feature type="compositionally biased region" description="Basic and acidic residues" evidence="2">
    <location>
        <begin position="140"/>
        <end position="156"/>
    </location>
</feature>
<feature type="compositionally biased region" description="Polar residues" evidence="2">
    <location>
        <begin position="208"/>
        <end position="221"/>
    </location>
</feature>
<feature type="compositionally biased region" description="Low complexity" evidence="2">
    <location>
        <begin position="251"/>
        <end position="260"/>
    </location>
</feature>
<keyword id="KW-0133">Cell shape</keyword>
<keyword id="KW-0963">Cytoplasm</keyword>
<keyword id="KW-0206">Cytoskeleton</keyword>
<keyword id="KW-1185">Reference proteome</keyword>
<protein>
    <recommendedName>
        <fullName>GTPase-interacting component 1</fullName>
    </recommendedName>
</protein>
<name>GIC1_YEAST</name>
<dbReference type="EMBL" id="U00061">
    <property type="protein sequence ID" value="AAB68388.1"/>
    <property type="molecule type" value="Genomic_DNA"/>
</dbReference>
<dbReference type="EMBL" id="BK006934">
    <property type="protein sequence ID" value="DAA06754.1"/>
    <property type="molecule type" value="Genomic_DNA"/>
</dbReference>
<dbReference type="PIR" id="S46709">
    <property type="entry name" value="S46709"/>
</dbReference>
<dbReference type="RefSeq" id="NP_011928.1">
    <property type="nucleotide sequence ID" value="NM_001179191.1"/>
</dbReference>
<dbReference type="EMDB" id="EMD-2504"/>
<dbReference type="EMDB" id="EMD-2505"/>
<dbReference type="BioGRID" id="36493">
    <property type="interactions" value="129"/>
</dbReference>
<dbReference type="DIP" id="DIP-1217N"/>
<dbReference type="FunCoup" id="P38785">
    <property type="interactions" value="64"/>
</dbReference>
<dbReference type="IntAct" id="P38785">
    <property type="interactions" value="33"/>
</dbReference>
<dbReference type="MINT" id="P38785"/>
<dbReference type="STRING" id="4932.YHR061C"/>
<dbReference type="iPTMnet" id="P38785"/>
<dbReference type="PaxDb" id="4932-YHR061C"/>
<dbReference type="PeptideAtlas" id="P38785"/>
<dbReference type="EnsemblFungi" id="YHR061C_mRNA">
    <property type="protein sequence ID" value="YHR061C"/>
    <property type="gene ID" value="YHR061C"/>
</dbReference>
<dbReference type="GeneID" id="856458"/>
<dbReference type="KEGG" id="sce:YHR061C"/>
<dbReference type="AGR" id="SGD:S000001103"/>
<dbReference type="SGD" id="S000001103">
    <property type="gene designation" value="GIC1"/>
</dbReference>
<dbReference type="VEuPathDB" id="FungiDB:YHR061C"/>
<dbReference type="eggNOG" id="ENOG502SSPG">
    <property type="taxonomic scope" value="Eukaryota"/>
</dbReference>
<dbReference type="GeneTree" id="ENSGT00940000176666"/>
<dbReference type="HOGENOM" id="CLU_045871_0_0_1"/>
<dbReference type="InParanoid" id="P38785"/>
<dbReference type="OMA" id="HHISHAN"/>
<dbReference type="OrthoDB" id="4054422at2759"/>
<dbReference type="BioCyc" id="YEAST:G3O-31114-MONOMER"/>
<dbReference type="BioGRID-ORCS" id="856458">
    <property type="hits" value="1 hit in 10 CRISPR screens"/>
</dbReference>
<dbReference type="PRO" id="PR:P38785"/>
<dbReference type="Proteomes" id="UP000002311">
    <property type="component" value="Chromosome VIII"/>
</dbReference>
<dbReference type="RNAct" id="P38785">
    <property type="molecule type" value="protein"/>
</dbReference>
<dbReference type="GO" id="GO:0005938">
    <property type="term" value="C:cell cortex"/>
    <property type="evidence" value="ECO:0007669"/>
    <property type="project" value="UniProtKB-SubCell"/>
</dbReference>
<dbReference type="GO" id="GO:0005935">
    <property type="term" value="C:cellular bud neck"/>
    <property type="evidence" value="ECO:0000314"/>
    <property type="project" value="SGD"/>
</dbReference>
<dbReference type="GO" id="GO:0005934">
    <property type="term" value="C:cellular bud tip"/>
    <property type="evidence" value="ECO:0000314"/>
    <property type="project" value="SGD"/>
</dbReference>
<dbReference type="GO" id="GO:0005737">
    <property type="term" value="C:cytoplasm"/>
    <property type="evidence" value="ECO:0007005"/>
    <property type="project" value="SGD"/>
</dbReference>
<dbReference type="GO" id="GO:0005856">
    <property type="term" value="C:cytoskeleton"/>
    <property type="evidence" value="ECO:0007669"/>
    <property type="project" value="UniProtKB-SubCell"/>
</dbReference>
<dbReference type="GO" id="GO:0000131">
    <property type="term" value="C:incipient cellular bud site"/>
    <property type="evidence" value="ECO:0000314"/>
    <property type="project" value="SGD"/>
</dbReference>
<dbReference type="GO" id="GO:0043332">
    <property type="term" value="C:mating projection tip"/>
    <property type="evidence" value="ECO:0000314"/>
    <property type="project" value="SGD"/>
</dbReference>
<dbReference type="GO" id="GO:0005634">
    <property type="term" value="C:nucleus"/>
    <property type="evidence" value="ECO:0007005"/>
    <property type="project" value="SGD"/>
</dbReference>
<dbReference type="GO" id="GO:0031267">
    <property type="term" value="F:small GTPase binding"/>
    <property type="evidence" value="ECO:0000353"/>
    <property type="project" value="SGD"/>
</dbReference>
<dbReference type="GO" id="GO:0032488">
    <property type="term" value="P:Cdc42 protein signal transduction"/>
    <property type="evidence" value="ECO:0000316"/>
    <property type="project" value="SGD"/>
</dbReference>
<dbReference type="GO" id="GO:0030010">
    <property type="term" value="P:establishment of cell polarity"/>
    <property type="evidence" value="ECO:0000316"/>
    <property type="project" value="SGD"/>
</dbReference>
<dbReference type="GO" id="GO:0008360">
    <property type="term" value="P:regulation of cell shape"/>
    <property type="evidence" value="ECO:0007669"/>
    <property type="project" value="UniProtKB-KW"/>
</dbReference>
<dbReference type="GO" id="GO:0007096">
    <property type="term" value="P:regulation of exit from mitosis"/>
    <property type="evidence" value="ECO:0000315"/>
    <property type="project" value="SGD"/>
</dbReference>
<dbReference type="GO" id="GO:0031106">
    <property type="term" value="P:septin ring organization"/>
    <property type="evidence" value="ECO:0000316"/>
    <property type="project" value="SGD"/>
</dbReference>
<dbReference type="CDD" id="cd00132">
    <property type="entry name" value="CRIB"/>
    <property type="match status" value="1"/>
</dbReference>
<dbReference type="InterPro" id="IPR000095">
    <property type="entry name" value="CRIB_dom"/>
</dbReference>
<dbReference type="SMART" id="SM00285">
    <property type="entry name" value="PBD"/>
    <property type="match status" value="1"/>
</dbReference>
<dbReference type="PROSITE" id="PS50108">
    <property type="entry name" value="CRIB"/>
    <property type="match status" value="1"/>
</dbReference>
<reference key="1">
    <citation type="journal article" date="1994" name="Science">
        <title>Complete nucleotide sequence of Saccharomyces cerevisiae chromosome VIII.</title>
        <authorList>
            <person name="Johnston M."/>
            <person name="Andrews S."/>
            <person name="Brinkman R."/>
            <person name="Cooper J."/>
            <person name="Ding H."/>
            <person name="Dover J."/>
            <person name="Du Z."/>
            <person name="Favello A."/>
            <person name="Fulton L."/>
            <person name="Gattung S."/>
            <person name="Geisel C."/>
            <person name="Kirsten J."/>
            <person name="Kucaba T."/>
            <person name="Hillier L.W."/>
            <person name="Jier M."/>
            <person name="Johnston L."/>
            <person name="Langston Y."/>
            <person name="Latreille P."/>
            <person name="Louis E.J."/>
            <person name="Macri C."/>
            <person name="Mardis E."/>
            <person name="Menezes S."/>
            <person name="Mouser L."/>
            <person name="Nhan M."/>
            <person name="Rifkin L."/>
            <person name="Riles L."/>
            <person name="St Peter H."/>
            <person name="Trevaskis E."/>
            <person name="Vaughan K."/>
            <person name="Vignati D."/>
            <person name="Wilcox L."/>
            <person name="Wohldman P."/>
            <person name="Waterston R."/>
            <person name="Wilson R."/>
            <person name="Vaudin M."/>
        </authorList>
    </citation>
    <scope>NUCLEOTIDE SEQUENCE [LARGE SCALE GENOMIC DNA]</scope>
    <source>
        <strain>ATCC 204508 / S288c</strain>
    </source>
</reference>
<reference key="2">
    <citation type="journal article" date="2014" name="G3 (Bethesda)">
        <title>The reference genome sequence of Saccharomyces cerevisiae: Then and now.</title>
        <authorList>
            <person name="Engel S.R."/>
            <person name="Dietrich F.S."/>
            <person name="Fisk D.G."/>
            <person name="Binkley G."/>
            <person name="Balakrishnan R."/>
            <person name="Costanzo M.C."/>
            <person name="Dwight S.S."/>
            <person name="Hitz B.C."/>
            <person name="Karra K."/>
            <person name="Nash R.S."/>
            <person name="Weng S."/>
            <person name="Wong E.D."/>
            <person name="Lloyd P."/>
            <person name="Skrzypek M.S."/>
            <person name="Miyasato S.R."/>
            <person name="Simison M."/>
            <person name="Cherry J.M."/>
        </authorList>
    </citation>
    <scope>GENOME REANNOTATION</scope>
    <source>
        <strain>ATCC 204508 / S288c</strain>
    </source>
</reference>
<reference key="3">
    <citation type="journal article" date="1997" name="Genes Dev.">
        <title>The Cdc42 GTPase-associated proteins Gic1 and Gic2 are required for polarized cell growth in Saccharomyces cerevisiae.</title>
        <authorList>
            <person name="Chen G.C."/>
            <person name="Kim Y.J."/>
            <person name="Chan C.S."/>
        </authorList>
    </citation>
    <scope>CHARACTERIZATION</scope>
</reference>
<reference key="4">
    <citation type="journal article" date="1997" name="Genes Dev.">
        <title>Novel Cdc42-binding proteins Gic1 and Gic2 control cell polarity in yeast.</title>
        <authorList>
            <person name="Brown J.L."/>
            <person name="Jaquenoud M."/>
            <person name="Gulli M.P."/>
            <person name="Chant J."/>
            <person name="Peter M."/>
        </authorList>
    </citation>
    <scope>CHARACTERIZATION</scope>
</reference>
<reference key="5">
    <citation type="journal article" date="2003" name="Nature">
        <title>Global analysis of protein expression in yeast.</title>
        <authorList>
            <person name="Ghaemmaghami S."/>
            <person name="Huh W.-K."/>
            <person name="Bower K."/>
            <person name="Howson R.W."/>
            <person name="Belle A."/>
            <person name="Dephoure N."/>
            <person name="O'Shea E.K."/>
            <person name="Weissman J.S."/>
        </authorList>
    </citation>
    <scope>LEVEL OF PROTEIN EXPRESSION [LARGE SCALE ANALYSIS]</scope>
</reference>
<accession>P38785</accession>
<accession>D3DL10</accession>
<organism>
    <name type="scientific">Saccharomyces cerevisiae (strain ATCC 204508 / S288c)</name>
    <name type="common">Baker's yeast</name>
    <dbReference type="NCBI Taxonomy" id="559292"/>
    <lineage>
        <taxon>Eukaryota</taxon>
        <taxon>Fungi</taxon>
        <taxon>Dikarya</taxon>
        <taxon>Ascomycota</taxon>
        <taxon>Saccharomycotina</taxon>
        <taxon>Saccharomycetes</taxon>
        <taxon>Saccharomycetales</taxon>
        <taxon>Saccharomycetaceae</taxon>
        <taxon>Saccharomyces</taxon>
    </lineage>
</organism>
<comment type="function">
    <text>Required for cell size and shape control, bud site selection, bud emergence, actin cytoskeletal organization, mitotic spindle orientation/positioning, and mating projection formation in response to mating pheromone.</text>
</comment>
<comment type="subunit">
    <text>Interacts with GTP-bound CDC42.</text>
</comment>
<comment type="interaction">
    <interactant intactId="EBI-7575">
        <id>P38785</id>
    </interactant>
    <interactant intactId="EBI-3586">
        <id>P47113</id>
        <label>BFA1</label>
    </interactant>
    <organismsDiffer>false</organismsDiffer>
    <experiments>2</experiments>
</comment>
<comment type="interaction">
    <interactant intactId="EBI-7575">
        <id>P38785</id>
    </interactant>
    <interactant intactId="EBI-3824">
        <id>P26448</id>
        <label>BUB2</label>
    </interactant>
    <organismsDiffer>false</organismsDiffer>
    <experiments>5</experiments>
</comment>
<comment type="interaction">
    <interactant intactId="EBI-7575">
        <id>P38785</id>
    </interactant>
    <interactant intactId="EBI-4178">
        <id>P32458</id>
        <label>CDC11</label>
    </interactant>
    <organismsDiffer>false</organismsDiffer>
    <experiments>2</experiments>
</comment>
<comment type="interaction">
    <interactant intactId="EBI-7575">
        <id>P38785</id>
    </interactant>
    <interactant intactId="EBI-4182">
        <id>P32468</id>
        <label>CDC12</label>
    </interactant>
    <organismsDiffer>false</organismsDiffer>
    <experiments>5</experiments>
</comment>
<comment type="interaction">
    <interactant intactId="EBI-7575">
        <id>P38785</id>
    </interactant>
    <interactant intactId="EBI-4192">
        <id>Q00684</id>
        <label>CDC14</label>
    </interactant>
    <organismsDiffer>false</organismsDiffer>
    <experiments>2</experiments>
</comment>
<comment type="interaction">
    <interactant intactId="EBI-7575">
        <id>P38785</id>
    </interactant>
    <interactant intactId="EBI-4429">
        <id>P32457</id>
        <label>CDC3</label>
    </interactant>
    <organismsDiffer>false</organismsDiffer>
    <experiments>2</experiments>
</comment>
<comment type="subcellular location">
    <subcellularLocation>
        <location>Bud neck</location>
    </subcellularLocation>
    <subcellularLocation>
        <location>Bud tip</location>
    </subcellularLocation>
    <subcellularLocation>
        <location>Cytoplasm</location>
        <location>Cell cortex</location>
    </subcellularLocation>
    <subcellularLocation>
        <location>Cytoplasm</location>
        <location>Cytoskeleton</location>
    </subcellularLocation>
    <text>Concentrated at the incipient bud site of unbudded cells, at the bud tip and mother-bud neck of budded cells, and at cortical sites on large-budded cells that may delimit future bud sites in the two progeny cells.</text>
</comment>
<comment type="miscellaneous">
    <text evidence="3">Present with 1100 molecules/cell in log phase SD medium.</text>
</comment>
<comment type="similarity">
    <text evidence="4">Belongs to the BORG/CEP family.</text>
</comment>
<sequence>MTEGKRLQQMELPQMKSIWIDEDQEMEKLYGFQVRQRFMNGPSTDSDEDADEDLGIVLVDSKKLALPNKNNIKLPPLPNYMTINPNINSNHKSLTNKKKNFLGMFKKKDLLSRRHGSAKTAKQSSISTPFDFHHISHANGKREDNPLESHEEKHDVESLVKFTSLAPQPRPDSNVSSKYSNVVMNDSSRIVSSSTIATTMDSHHDGNETNNTPNGNKQLDSPTDLEMTLEDLRNYTFPSVLGDSVSEKTNPSSPSVSSFSGKFKPRELSALHTPELGNCFNVDQSLNSPGNRISVDDVLKFYYQCSETSTPRNT</sequence>
<gene>
    <name type="primary">GIC1</name>
    <name type="ordered locus">YHR061C</name>
</gene>
<evidence type="ECO:0000255" key="1">
    <source>
        <dbReference type="PROSITE-ProRule" id="PRU00057"/>
    </source>
</evidence>
<evidence type="ECO:0000256" key="2">
    <source>
        <dbReference type="SAM" id="MobiDB-lite"/>
    </source>
</evidence>
<evidence type="ECO:0000269" key="3">
    <source>
    </source>
</evidence>
<evidence type="ECO:0000305" key="4"/>